<evidence type="ECO:0000255" key="1">
    <source>
        <dbReference type="HAMAP-Rule" id="MF_01694"/>
    </source>
</evidence>
<evidence type="ECO:0000255" key="2">
    <source>
        <dbReference type="PROSITE-ProRule" id="PRU01266"/>
    </source>
</evidence>
<keyword id="KW-0001">2Fe-2S</keyword>
<keyword id="KW-0004">4Fe-4S</keyword>
<keyword id="KW-0093">Biotin biosynthesis</keyword>
<keyword id="KW-0408">Iron</keyword>
<keyword id="KW-0411">Iron-sulfur</keyword>
<keyword id="KW-0479">Metal-binding</keyword>
<keyword id="KW-1185">Reference proteome</keyword>
<keyword id="KW-0949">S-adenosyl-L-methionine</keyword>
<keyword id="KW-0808">Transferase</keyword>
<dbReference type="EC" id="2.8.1.6" evidence="1"/>
<dbReference type="EMBL" id="CP000529">
    <property type="protein sequence ID" value="ABM39322.1"/>
    <property type="molecule type" value="Genomic_DNA"/>
</dbReference>
<dbReference type="RefSeq" id="WP_011803386.1">
    <property type="nucleotide sequence ID" value="NC_008781.1"/>
</dbReference>
<dbReference type="SMR" id="A1VUJ4"/>
<dbReference type="STRING" id="365044.Pnap_4030"/>
<dbReference type="KEGG" id="pna:Pnap_4030"/>
<dbReference type="eggNOG" id="COG0502">
    <property type="taxonomic scope" value="Bacteria"/>
</dbReference>
<dbReference type="HOGENOM" id="CLU_033172_1_2_4"/>
<dbReference type="OrthoDB" id="9786826at2"/>
<dbReference type="UniPathway" id="UPA00078">
    <property type="reaction ID" value="UER00162"/>
</dbReference>
<dbReference type="Proteomes" id="UP000000644">
    <property type="component" value="Chromosome"/>
</dbReference>
<dbReference type="GO" id="GO:0051537">
    <property type="term" value="F:2 iron, 2 sulfur cluster binding"/>
    <property type="evidence" value="ECO:0007669"/>
    <property type="project" value="UniProtKB-KW"/>
</dbReference>
<dbReference type="GO" id="GO:0051539">
    <property type="term" value="F:4 iron, 4 sulfur cluster binding"/>
    <property type="evidence" value="ECO:0007669"/>
    <property type="project" value="UniProtKB-KW"/>
</dbReference>
<dbReference type="GO" id="GO:0004076">
    <property type="term" value="F:biotin synthase activity"/>
    <property type="evidence" value="ECO:0007669"/>
    <property type="project" value="UniProtKB-UniRule"/>
</dbReference>
<dbReference type="GO" id="GO:0005506">
    <property type="term" value="F:iron ion binding"/>
    <property type="evidence" value="ECO:0007669"/>
    <property type="project" value="UniProtKB-UniRule"/>
</dbReference>
<dbReference type="GO" id="GO:0009102">
    <property type="term" value="P:biotin biosynthetic process"/>
    <property type="evidence" value="ECO:0007669"/>
    <property type="project" value="UniProtKB-UniRule"/>
</dbReference>
<dbReference type="CDD" id="cd01335">
    <property type="entry name" value="Radical_SAM"/>
    <property type="match status" value="1"/>
</dbReference>
<dbReference type="FunFam" id="3.20.20.70:FF:000011">
    <property type="entry name" value="Biotin synthase"/>
    <property type="match status" value="1"/>
</dbReference>
<dbReference type="Gene3D" id="3.20.20.70">
    <property type="entry name" value="Aldolase class I"/>
    <property type="match status" value="1"/>
</dbReference>
<dbReference type="HAMAP" id="MF_01694">
    <property type="entry name" value="BioB"/>
    <property type="match status" value="1"/>
</dbReference>
<dbReference type="InterPro" id="IPR013785">
    <property type="entry name" value="Aldolase_TIM"/>
</dbReference>
<dbReference type="InterPro" id="IPR010722">
    <property type="entry name" value="BATS_dom"/>
</dbReference>
<dbReference type="InterPro" id="IPR002684">
    <property type="entry name" value="Biotin_synth/BioAB"/>
</dbReference>
<dbReference type="InterPro" id="IPR024177">
    <property type="entry name" value="Biotin_synthase"/>
</dbReference>
<dbReference type="InterPro" id="IPR006638">
    <property type="entry name" value="Elp3/MiaA/NifB-like_rSAM"/>
</dbReference>
<dbReference type="InterPro" id="IPR007197">
    <property type="entry name" value="rSAM"/>
</dbReference>
<dbReference type="NCBIfam" id="TIGR00433">
    <property type="entry name" value="bioB"/>
    <property type="match status" value="1"/>
</dbReference>
<dbReference type="PANTHER" id="PTHR22976">
    <property type="entry name" value="BIOTIN SYNTHASE"/>
    <property type="match status" value="1"/>
</dbReference>
<dbReference type="PANTHER" id="PTHR22976:SF2">
    <property type="entry name" value="BIOTIN SYNTHASE, MITOCHONDRIAL"/>
    <property type="match status" value="1"/>
</dbReference>
<dbReference type="Pfam" id="PF06968">
    <property type="entry name" value="BATS"/>
    <property type="match status" value="1"/>
</dbReference>
<dbReference type="Pfam" id="PF04055">
    <property type="entry name" value="Radical_SAM"/>
    <property type="match status" value="1"/>
</dbReference>
<dbReference type="PIRSF" id="PIRSF001619">
    <property type="entry name" value="Biotin_synth"/>
    <property type="match status" value="1"/>
</dbReference>
<dbReference type="SFLD" id="SFLDF00272">
    <property type="entry name" value="biotin_synthase"/>
    <property type="match status" value="1"/>
</dbReference>
<dbReference type="SFLD" id="SFLDS00029">
    <property type="entry name" value="Radical_SAM"/>
    <property type="match status" value="1"/>
</dbReference>
<dbReference type="SMART" id="SM00876">
    <property type="entry name" value="BATS"/>
    <property type="match status" value="1"/>
</dbReference>
<dbReference type="SMART" id="SM00729">
    <property type="entry name" value="Elp3"/>
    <property type="match status" value="1"/>
</dbReference>
<dbReference type="SUPFAM" id="SSF102114">
    <property type="entry name" value="Radical SAM enzymes"/>
    <property type="match status" value="1"/>
</dbReference>
<dbReference type="PROSITE" id="PS51918">
    <property type="entry name" value="RADICAL_SAM"/>
    <property type="match status" value="1"/>
</dbReference>
<reference key="1">
    <citation type="journal article" date="2009" name="Environ. Microbiol.">
        <title>The genome of Polaromonas naphthalenivorans strain CJ2, isolated from coal tar-contaminated sediment, reveals physiological and metabolic versatility and evolution through extensive horizontal gene transfer.</title>
        <authorList>
            <person name="Yagi J.M."/>
            <person name="Sims D."/>
            <person name="Brettin T."/>
            <person name="Bruce D."/>
            <person name="Madsen E.L."/>
        </authorList>
    </citation>
    <scope>NUCLEOTIDE SEQUENCE [LARGE SCALE GENOMIC DNA]</scope>
    <source>
        <strain>CJ2</strain>
    </source>
</reference>
<proteinExistence type="inferred from homology"/>
<organism>
    <name type="scientific">Polaromonas naphthalenivorans (strain CJ2)</name>
    <dbReference type="NCBI Taxonomy" id="365044"/>
    <lineage>
        <taxon>Bacteria</taxon>
        <taxon>Pseudomonadati</taxon>
        <taxon>Pseudomonadota</taxon>
        <taxon>Betaproteobacteria</taxon>
        <taxon>Burkholderiales</taxon>
        <taxon>Comamonadaceae</taxon>
        <taxon>Polaromonas</taxon>
    </lineage>
</organism>
<feature type="chain" id="PRO_0000381528" description="Biotin synthase">
    <location>
        <begin position="1"/>
        <end position="345"/>
    </location>
</feature>
<feature type="domain" description="Radical SAM core" evidence="2">
    <location>
        <begin position="60"/>
        <end position="287"/>
    </location>
</feature>
<feature type="binding site" evidence="1">
    <location>
        <position position="75"/>
    </location>
    <ligand>
        <name>[4Fe-4S] cluster</name>
        <dbReference type="ChEBI" id="CHEBI:49883"/>
        <note>4Fe-4S-S-AdoMet</note>
    </ligand>
</feature>
<feature type="binding site" evidence="1">
    <location>
        <position position="79"/>
    </location>
    <ligand>
        <name>[4Fe-4S] cluster</name>
        <dbReference type="ChEBI" id="CHEBI:49883"/>
        <note>4Fe-4S-S-AdoMet</note>
    </ligand>
</feature>
<feature type="binding site" evidence="1">
    <location>
        <position position="82"/>
    </location>
    <ligand>
        <name>[4Fe-4S] cluster</name>
        <dbReference type="ChEBI" id="CHEBI:49883"/>
        <note>4Fe-4S-S-AdoMet</note>
    </ligand>
</feature>
<feature type="binding site" evidence="1">
    <location>
        <position position="119"/>
    </location>
    <ligand>
        <name>[2Fe-2S] cluster</name>
        <dbReference type="ChEBI" id="CHEBI:190135"/>
    </ligand>
</feature>
<feature type="binding site" evidence="1">
    <location>
        <position position="150"/>
    </location>
    <ligand>
        <name>[2Fe-2S] cluster</name>
        <dbReference type="ChEBI" id="CHEBI:190135"/>
    </ligand>
</feature>
<feature type="binding site" evidence="1">
    <location>
        <position position="210"/>
    </location>
    <ligand>
        <name>[2Fe-2S] cluster</name>
        <dbReference type="ChEBI" id="CHEBI:190135"/>
    </ligand>
</feature>
<feature type="binding site" evidence="1">
    <location>
        <position position="282"/>
    </location>
    <ligand>
        <name>[2Fe-2S] cluster</name>
        <dbReference type="ChEBI" id="CHEBI:190135"/>
    </ligand>
</feature>
<accession>A1VUJ4</accession>
<protein>
    <recommendedName>
        <fullName evidence="1">Biotin synthase</fullName>
        <ecNumber evidence="1">2.8.1.6</ecNumber>
    </recommendedName>
</protein>
<comment type="function">
    <text evidence="1">Catalyzes the conversion of dethiobiotin (DTB) to biotin by the insertion of a sulfur atom into dethiobiotin via a radical-based mechanism.</text>
</comment>
<comment type="catalytic activity">
    <reaction evidence="1">
        <text>(4R,5S)-dethiobiotin + (sulfur carrier)-SH + 2 reduced [2Fe-2S]-[ferredoxin] + 2 S-adenosyl-L-methionine = (sulfur carrier)-H + biotin + 2 5'-deoxyadenosine + 2 L-methionine + 2 oxidized [2Fe-2S]-[ferredoxin]</text>
        <dbReference type="Rhea" id="RHEA:22060"/>
        <dbReference type="Rhea" id="RHEA-COMP:10000"/>
        <dbReference type="Rhea" id="RHEA-COMP:10001"/>
        <dbReference type="Rhea" id="RHEA-COMP:14737"/>
        <dbReference type="Rhea" id="RHEA-COMP:14739"/>
        <dbReference type="ChEBI" id="CHEBI:17319"/>
        <dbReference type="ChEBI" id="CHEBI:29917"/>
        <dbReference type="ChEBI" id="CHEBI:33737"/>
        <dbReference type="ChEBI" id="CHEBI:33738"/>
        <dbReference type="ChEBI" id="CHEBI:57586"/>
        <dbReference type="ChEBI" id="CHEBI:57844"/>
        <dbReference type="ChEBI" id="CHEBI:59789"/>
        <dbReference type="ChEBI" id="CHEBI:64428"/>
        <dbReference type="ChEBI" id="CHEBI:149473"/>
        <dbReference type="EC" id="2.8.1.6"/>
    </reaction>
</comment>
<comment type="cofactor">
    <cofactor evidence="1">
        <name>[4Fe-4S] cluster</name>
        <dbReference type="ChEBI" id="CHEBI:49883"/>
    </cofactor>
    <text evidence="1">Binds 1 [4Fe-4S] cluster. The cluster is coordinated with 3 cysteines and an exchangeable S-adenosyl-L-methionine.</text>
</comment>
<comment type="cofactor">
    <cofactor evidence="1">
        <name>[2Fe-2S] cluster</name>
        <dbReference type="ChEBI" id="CHEBI:190135"/>
    </cofactor>
    <text evidence="1">Binds 1 [2Fe-2S] cluster. The cluster is coordinated with 3 cysteines and 1 arginine.</text>
</comment>
<comment type="pathway">
    <text evidence="1">Cofactor biosynthesis; biotin biosynthesis; biotin from 7,8-diaminononanoate: step 2/2.</text>
</comment>
<comment type="subunit">
    <text evidence="1">Homodimer.</text>
</comment>
<comment type="similarity">
    <text evidence="1">Belongs to the radical SAM superfamily. Biotin synthase family.</text>
</comment>
<sequence>MTSITTIPLSTLRSSLPARPDAAAAPQRWRVADIEALYALPFMDLLFRAQQVHRANFDANQVQLSTLLSIKTGGCAEDCGYCPQSSHFETEVKASKLMALDEVMAAAQAAKDQGATRFCMGAAWSRPKERDMERVTEMVREVRGLGLETCMTLGMLEAEQAQALKDAGLDYYNHNLDSSPEFYGSIISTRTYQDRLDTLENVRGAGINVCCGGIVGMGESRAQRAGLVAQLANLEPYPESVPINNLVAVEGTPLADTPPLDPFEFVRTIAVARITMPRTMVRLSAGREQMDEALQALCFMAGANSIFYGDRLLTTSNPQADKDRQLFARLGLKVQGERPAATVQG</sequence>
<name>BIOB_POLNA</name>
<gene>
    <name evidence="1" type="primary">bioB</name>
    <name type="ordered locus">Pnap_4030</name>
</gene>